<feature type="chain" id="PRO_0000110352" description="NAD-dependent protein deacetylase">
    <location>
        <begin position="1"/>
        <end position="243"/>
    </location>
</feature>
<feature type="domain" description="Deacetylase sirtuin-type" evidence="2">
    <location>
        <begin position="1"/>
        <end position="243"/>
    </location>
</feature>
<feature type="active site" description="Proton acceptor" evidence="2">
    <location>
        <position position="123"/>
    </location>
</feature>
<feature type="binding site" evidence="1">
    <location>
        <position position="24"/>
    </location>
    <ligand>
        <name>NAD(+)</name>
        <dbReference type="ChEBI" id="CHEBI:57540"/>
    </ligand>
</feature>
<feature type="binding site" evidence="1">
    <location>
        <position position="35"/>
    </location>
    <ligand>
        <name>NAD(+)</name>
        <dbReference type="ChEBI" id="CHEBI:57540"/>
    </ligand>
</feature>
<feature type="binding site" evidence="1">
    <location>
        <position position="35"/>
    </location>
    <ligand>
        <name>nicotinamide</name>
        <dbReference type="ChEBI" id="CHEBI:17154"/>
    </ligand>
</feature>
<feature type="binding site" evidence="1">
    <location>
        <position position="36"/>
    </location>
    <ligand>
        <name>NAD(+)</name>
        <dbReference type="ChEBI" id="CHEBI:57540"/>
    </ligand>
</feature>
<feature type="binding site" evidence="1">
    <location>
        <position position="105"/>
    </location>
    <ligand>
        <name>NAD(+)</name>
        <dbReference type="ChEBI" id="CHEBI:57540"/>
    </ligand>
</feature>
<feature type="binding site" evidence="1">
    <location>
        <position position="107"/>
    </location>
    <ligand>
        <name>NAD(+)</name>
        <dbReference type="ChEBI" id="CHEBI:57540"/>
    </ligand>
</feature>
<feature type="binding site" evidence="1">
    <location>
        <position position="107"/>
    </location>
    <ligand>
        <name>nicotinamide</name>
        <dbReference type="ChEBI" id="CHEBI:17154"/>
    </ligand>
</feature>
<feature type="binding site" evidence="1">
    <location>
        <position position="108"/>
    </location>
    <ligand>
        <name>NAD(+)</name>
        <dbReference type="ChEBI" id="CHEBI:57540"/>
    </ligand>
</feature>
<feature type="binding site" evidence="1">
    <location>
        <position position="108"/>
    </location>
    <ligand>
        <name>nicotinamide</name>
        <dbReference type="ChEBI" id="CHEBI:17154"/>
    </ligand>
</feature>
<feature type="binding site" evidence="1">
    <location>
        <position position="123"/>
    </location>
    <ligand>
        <name>NAD(+)</name>
        <dbReference type="ChEBI" id="CHEBI:57540"/>
    </ligand>
</feature>
<feature type="binding site" evidence="1">
    <location>
        <position position="131"/>
    </location>
    <ligand>
        <name>Zn(2+)</name>
        <dbReference type="ChEBI" id="CHEBI:29105"/>
    </ligand>
</feature>
<feature type="binding site" evidence="1">
    <location>
        <position position="134"/>
    </location>
    <ligand>
        <name>Zn(2+)</name>
        <dbReference type="ChEBI" id="CHEBI:29105"/>
    </ligand>
</feature>
<feature type="binding site" evidence="1">
    <location>
        <position position="151"/>
    </location>
    <ligand>
        <name>Zn(2+)</name>
        <dbReference type="ChEBI" id="CHEBI:29105"/>
    </ligand>
</feature>
<feature type="binding site" evidence="1">
    <location>
        <position position="154"/>
    </location>
    <ligand>
        <name>Zn(2+)</name>
        <dbReference type="ChEBI" id="CHEBI:29105"/>
    </ligand>
</feature>
<feature type="binding site" evidence="1">
    <location>
        <position position="192"/>
    </location>
    <ligand>
        <name>NAD(+)</name>
        <dbReference type="ChEBI" id="CHEBI:57540"/>
    </ligand>
</feature>
<feature type="binding site" evidence="1">
    <location>
        <position position="193"/>
    </location>
    <ligand>
        <name>NAD(+)</name>
        <dbReference type="ChEBI" id="CHEBI:57540"/>
    </ligand>
</feature>
<feature type="binding site" evidence="1">
    <location>
        <position position="215"/>
    </location>
    <ligand>
        <name>NAD(+)</name>
        <dbReference type="ChEBI" id="CHEBI:57540"/>
    </ligand>
</feature>
<feature type="binding site" evidence="1">
    <location>
        <position position="232"/>
    </location>
    <ligand>
        <name>NAD(+)</name>
        <dbReference type="ChEBI" id="CHEBI:57540"/>
    </ligand>
</feature>
<comment type="function">
    <text evidence="1">NAD-dependent protein deacetylase which modulates the activities of several enzymes which are inactive in their acetylated form.</text>
</comment>
<comment type="catalytic activity">
    <reaction evidence="1">
        <text>N(6)-acetyl-L-lysyl-[protein] + NAD(+) + H2O = 2''-O-acetyl-ADP-D-ribose + nicotinamide + L-lysyl-[protein]</text>
        <dbReference type="Rhea" id="RHEA:43636"/>
        <dbReference type="Rhea" id="RHEA-COMP:9752"/>
        <dbReference type="Rhea" id="RHEA-COMP:10731"/>
        <dbReference type="ChEBI" id="CHEBI:15377"/>
        <dbReference type="ChEBI" id="CHEBI:17154"/>
        <dbReference type="ChEBI" id="CHEBI:29969"/>
        <dbReference type="ChEBI" id="CHEBI:57540"/>
        <dbReference type="ChEBI" id="CHEBI:61930"/>
        <dbReference type="ChEBI" id="CHEBI:83767"/>
        <dbReference type="EC" id="2.3.1.286"/>
    </reaction>
</comment>
<comment type="cofactor">
    <cofactor evidence="1">
        <name>Zn(2+)</name>
        <dbReference type="ChEBI" id="CHEBI:29105"/>
    </cofactor>
    <text evidence="1">Binds 1 zinc ion per subunit.</text>
</comment>
<comment type="subcellular location">
    <subcellularLocation>
        <location evidence="1">Cytoplasm</location>
    </subcellularLocation>
</comment>
<comment type="similarity">
    <text evidence="1">Belongs to the sirtuin family. Class U subfamily.</text>
</comment>
<sequence length="243" mass="27026">MRNDLETLKHIIDSSNRITFFTGAGVSVASGVPDFRSMGGLFDEISKDGLSPEYLLSRDYLEDDPEGFINFCHKRLLFVDTKPNIVHDWIAKLERNQQSLGVITQNIDGLHSDAGSQHVDELHGTLNRFYCNACHKSYTKSDVIDRTLKHCDNCGGAIRPDIVLYGEMLDQPTIIRALNKIEHADTLVVLGSSLVVQPAAGLISHFKGDNLIIINKDRTPYDSDATLVIHDDMVSVVKSLMTE</sequence>
<name>NPD_STAAN</name>
<gene>
    <name evidence="1" type="primary">cobB</name>
    <name type="ordered locus">SA1999</name>
</gene>
<dbReference type="EC" id="2.3.1.286" evidence="1 2"/>
<dbReference type="EMBL" id="BA000018">
    <property type="protein sequence ID" value="BAB43289.1"/>
    <property type="molecule type" value="Genomic_DNA"/>
</dbReference>
<dbReference type="PIR" id="H90015">
    <property type="entry name" value="H90015"/>
</dbReference>
<dbReference type="SMR" id="P66816"/>
<dbReference type="EnsemblBacteria" id="BAB43289">
    <property type="protein sequence ID" value="BAB43289"/>
    <property type="gene ID" value="BAB43289"/>
</dbReference>
<dbReference type="KEGG" id="sau:SA1999"/>
<dbReference type="HOGENOM" id="CLU_023643_3_0_9"/>
<dbReference type="GO" id="GO:0005737">
    <property type="term" value="C:cytoplasm"/>
    <property type="evidence" value="ECO:0007669"/>
    <property type="project" value="UniProtKB-SubCell"/>
</dbReference>
<dbReference type="GO" id="GO:0017136">
    <property type="term" value="F:histone deacetylase activity, NAD-dependent"/>
    <property type="evidence" value="ECO:0007669"/>
    <property type="project" value="TreeGrafter"/>
</dbReference>
<dbReference type="GO" id="GO:0070403">
    <property type="term" value="F:NAD+ binding"/>
    <property type="evidence" value="ECO:0007669"/>
    <property type="project" value="UniProtKB-UniRule"/>
</dbReference>
<dbReference type="GO" id="GO:0008270">
    <property type="term" value="F:zinc ion binding"/>
    <property type="evidence" value="ECO:0007669"/>
    <property type="project" value="UniProtKB-UniRule"/>
</dbReference>
<dbReference type="CDD" id="cd01411">
    <property type="entry name" value="SIR2H"/>
    <property type="match status" value="1"/>
</dbReference>
<dbReference type="Gene3D" id="3.30.1600.10">
    <property type="entry name" value="SIR2/SIRT2 'Small Domain"/>
    <property type="match status" value="1"/>
</dbReference>
<dbReference type="Gene3D" id="3.40.50.1220">
    <property type="entry name" value="TPP-binding domain"/>
    <property type="match status" value="1"/>
</dbReference>
<dbReference type="HAMAP" id="MF_01968">
    <property type="entry name" value="Sirtuin_ClassU"/>
    <property type="match status" value="1"/>
</dbReference>
<dbReference type="InterPro" id="IPR029035">
    <property type="entry name" value="DHS-like_NAD/FAD-binding_dom"/>
</dbReference>
<dbReference type="InterPro" id="IPR050134">
    <property type="entry name" value="NAD-dep_sirtuin_deacylases"/>
</dbReference>
<dbReference type="InterPro" id="IPR003000">
    <property type="entry name" value="Sirtuin"/>
</dbReference>
<dbReference type="InterPro" id="IPR026591">
    <property type="entry name" value="Sirtuin_cat_small_dom_sf"/>
</dbReference>
<dbReference type="InterPro" id="IPR028628">
    <property type="entry name" value="Sirtuin_class_U"/>
</dbReference>
<dbReference type="InterPro" id="IPR026590">
    <property type="entry name" value="Ssirtuin_cat_dom"/>
</dbReference>
<dbReference type="NCBIfam" id="NF001752">
    <property type="entry name" value="PRK00481.1-1"/>
    <property type="match status" value="1"/>
</dbReference>
<dbReference type="PANTHER" id="PTHR11085:SF4">
    <property type="entry name" value="NAD-DEPENDENT PROTEIN DEACYLASE"/>
    <property type="match status" value="1"/>
</dbReference>
<dbReference type="PANTHER" id="PTHR11085">
    <property type="entry name" value="NAD-DEPENDENT PROTEIN DEACYLASE SIRTUIN-5, MITOCHONDRIAL-RELATED"/>
    <property type="match status" value="1"/>
</dbReference>
<dbReference type="Pfam" id="PF02146">
    <property type="entry name" value="SIR2"/>
    <property type="match status" value="1"/>
</dbReference>
<dbReference type="SUPFAM" id="SSF52467">
    <property type="entry name" value="DHS-like NAD/FAD-binding domain"/>
    <property type="match status" value="1"/>
</dbReference>
<dbReference type="PROSITE" id="PS50305">
    <property type="entry name" value="SIRTUIN"/>
    <property type="match status" value="1"/>
</dbReference>
<evidence type="ECO:0000255" key="1">
    <source>
        <dbReference type="HAMAP-Rule" id="MF_01968"/>
    </source>
</evidence>
<evidence type="ECO:0000255" key="2">
    <source>
        <dbReference type="PROSITE-ProRule" id="PRU00236"/>
    </source>
</evidence>
<proteinExistence type="inferred from homology"/>
<protein>
    <recommendedName>
        <fullName evidence="1">NAD-dependent protein deacetylase</fullName>
        <ecNumber evidence="1 2">2.3.1.286</ecNumber>
    </recommendedName>
    <alternativeName>
        <fullName evidence="1">Regulatory protein SIR2 homolog</fullName>
    </alternativeName>
</protein>
<accession>P66816</accession>
<accession>Q99S72</accession>
<reference key="1">
    <citation type="journal article" date="2001" name="Lancet">
        <title>Whole genome sequencing of meticillin-resistant Staphylococcus aureus.</title>
        <authorList>
            <person name="Kuroda M."/>
            <person name="Ohta T."/>
            <person name="Uchiyama I."/>
            <person name="Baba T."/>
            <person name="Yuzawa H."/>
            <person name="Kobayashi I."/>
            <person name="Cui L."/>
            <person name="Oguchi A."/>
            <person name="Aoki K."/>
            <person name="Nagai Y."/>
            <person name="Lian J.-Q."/>
            <person name="Ito T."/>
            <person name="Kanamori M."/>
            <person name="Matsumaru H."/>
            <person name="Maruyama A."/>
            <person name="Murakami H."/>
            <person name="Hosoyama A."/>
            <person name="Mizutani-Ui Y."/>
            <person name="Takahashi N.K."/>
            <person name="Sawano T."/>
            <person name="Inoue R."/>
            <person name="Kaito C."/>
            <person name="Sekimizu K."/>
            <person name="Hirakawa H."/>
            <person name="Kuhara S."/>
            <person name="Goto S."/>
            <person name="Yabuzaki J."/>
            <person name="Kanehisa M."/>
            <person name="Yamashita A."/>
            <person name="Oshima K."/>
            <person name="Furuya K."/>
            <person name="Yoshino C."/>
            <person name="Shiba T."/>
            <person name="Hattori M."/>
            <person name="Ogasawara N."/>
            <person name="Hayashi H."/>
            <person name="Hiramatsu K."/>
        </authorList>
    </citation>
    <scope>NUCLEOTIDE SEQUENCE [LARGE SCALE GENOMIC DNA]</scope>
    <source>
        <strain>N315</strain>
    </source>
</reference>
<organism>
    <name type="scientific">Staphylococcus aureus (strain N315)</name>
    <dbReference type="NCBI Taxonomy" id="158879"/>
    <lineage>
        <taxon>Bacteria</taxon>
        <taxon>Bacillati</taxon>
        <taxon>Bacillota</taxon>
        <taxon>Bacilli</taxon>
        <taxon>Bacillales</taxon>
        <taxon>Staphylococcaceae</taxon>
        <taxon>Staphylococcus</taxon>
    </lineage>
</organism>
<keyword id="KW-0963">Cytoplasm</keyword>
<keyword id="KW-0479">Metal-binding</keyword>
<keyword id="KW-0520">NAD</keyword>
<keyword id="KW-0808">Transferase</keyword>
<keyword id="KW-0862">Zinc</keyword>